<comment type="function">
    <text evidence="1">Catalyzes the conversion of dethiobiotin (DTB) to biotin by the insertion of a sulfur atom into dethiobiotin via a radical-based mechanism.</text>
</comment>
<comment type="catalytic activity">
    <reaction evidence="1">
        <text>(4R,5S)-dethiobiotin + (sulfur carrier)-SH + 2 reduced [2Fe-2S]-[ferredoxin] + 2 S-adenosyl-L-methionine = (sulfur carrier)-H + biotin + 2 5'-deoxyadenosine + 2 L-methionine + 2 oxidized [2Fe-2S]-[ferredoxin]</text>
        <dbReference type="Rhea" id="RHEA:22060"/>
        <dbReference type="Rhea" id="RHEA-COMP:10000"/>
        <dbReference type="Rhea" id="RHEA-COMP:10001"/>
        <dbReference type="Rhea" id="RHEA-COMP:14737"/>
        <dbReference type="Rhea" id="RHEA-COMP:14739"/>
        <dbReference type="ChEBI" id="CHEBI:17319"/>
        <dbReference type="ChEBI" id="CHEBI:29917"/>
        <dbReference type="ChEBI" id="CHEBI:33737"/>
        <dbReference type="ChEBI" id="CHEBI:33738"/>
        <dbReference type="ChEBI" id="CHEBI:57586"/>
        <dbReference type="ChEBI" id="CHEBI:57844"/>
        <dbReference type="ChEBI" id="CHEBI:59789"/>
        <dbReference type="ChEBI" id="CHEBI:64428"/>
        <dbReference type="ChEBI" id="CHEBI:149473"/>
        <dbReference type="EC" id="2.8.1.6"/>
    </reaction>
</comment>
<comment type="cofactor">
    <cofactor evidence="1">
        <name>[4Fe-4S] cluster</name>
        <dbReference type="ChEBI" id="CHEBI:49883"/>
    </cofactor>
    <text evidence="1">Binds 1 [4Fe-4S] cluster. The cluster is coordinated with 3 cysteines and an exchangeable S-adenosyl-L-methionine.</text>
</comment>
<comment type="cofactor">
    <cofactor evidence="1">
        <name>[2Fe-2S] cluster</name>
        <dbReference type="ChEBI" id="CHEBI:190135"/>
    </cofactor>
    <text evidence="1">Binds 1 [2Fe-2S] cluster. The cluster is coordinated with 3 cysteines and 1 arginine.</text>
</comment>
<comment type="pathway">
    <text evidence="1">Cofactor biosynthesis; biotin biosynthesis; biotin from 7,8-diaminononanoate: step 2/2.</text>
</comment>
<comment type="subunit">
    <text evidence="1">Homodimer.</text>
</comment>
<comment type="similarity">
    <text evidence="1">Belongs to the radical SAM superfamily. Biotin synthase family.</text>
</comment>
<dbReference type="EC" id="2.8.1.6" evidence="1"/>
<dbReference type="EMBL" id="CP000703">
    <property type="protein sequence ID" value="ABQ50228.1"/>
    <property type="molecule type" value="Genomic_DNA"/>
</dbReference>
<dbReference type="RefSeq" id="WP_001046645.1">
    <property type="nucleotide sequence ID" value="NC_009487.1"/>
</dbReference>
<dbReference type="SMR" id="A5IVK5"/>
<dbReference type="KEGG" id="saj:SaurJH9_2451"/>
<dbReference type="HOGENOM" id="CLU_033172_2_1_9"/>
<dbReference type="UniPathway" id="UPA00078">
    <property type="reaction ID" value="UER00162"/>
</dbReference>
<dbReference type="GO" id="GO:0051537">
    <property type="term" value="F:2 iron, 2 sulfur cluster binding"/>
    <property type="evidence" value="ECO:0007669"/>
    <property type="project" value="UniProtKB-KW"/>
</dbReference>
<dbReference type="GO" id="GO:0051539">
    <property type="term" value="F:4 iron, 4 sulfur cluster binding"/>
    <property type="evidence" value="ECO:0007669"/>
    <property type="project" value="UniProtKB-KW"/>
</dbReference>
<dbReference type="GO" id="GO:0004076">
    <property type="term" value="F:biotin synthase activity"/>
    <property type="evidence" value="ECO:0007669"/>
    <property type="project" value="UniProtKB-UniRule"/>
</dbReference>
<dbReference type="GO" id="GO:0005506">
    <property type="term" value="F:iron ion binding"/>
    <property type="evidence" value="ECO:0007669"/>
    <property type="project" value="UniProtKB-UniRule"/>
</dbReference>
<dbReference type="GO" id="GO:0009102">
    <property type="term" value="P:biotin biosynthetic process"/>
    <property type="evidence" value="ECO:0007669"/>
    <property type="project" value="UniProtKB-UniRule"/>
</dbReference>
<dbReference type="CDD" id="cd01335">
    <property type="entry name" value="Radical_SAM"/>
    <property type="match status" value="1"/>
</dbReference>
<dbReference type="FunFam" id="3.20.20.70:FF:000026">
    <property type="entry name" value="Biotin synthase"/>
    <property type="match status" value="1"/>
</dbReference>
<dbReference type="Gene3D" id="3.20.20.70">
    <property type="entry name" value="Aldolase class I"/>
    <property type="match status" value="1"/>
</dbReference>
<dbReference type="HAMAP" id="MF_01694">
    <property type="entry name" value="BioB"/>
    <property type="match status" value="1"/>
</dbReference>
<dbReference type="InterPro" id="IPR013785">
    <property type="entry name" value="Aldolase_TIM"/>
</dbReference>
<dbReference type="InterPro" id="IPR010722">
    <property type="entry name" value="BATS_dom"/>
</dbReference>
<dbReference type="InterPro" id="IPR002684">
    <property type="entry name" value="Biotin_synth/BioAB"/>
</dbReference>
<dbReference type="InterPro" id="IPR024177">
    <property type="entry name" value="Biotin_synthase"/>
</dbReference>
<dbReference type="InterPro" id="IPR006638">
    <property type="entry name" value="Elp3/MiaA/NifB-like_rSAM"/>
</dbReference>
<dbReference type="InterPro" id="IPR007197">
    <property type="entry name" value="rSAM"/>
</dbReference>
<dbReference type="NCBIfam" id="TIGR00433">
    <property type="entry name" value="bioB"/>
    <property type="match status" value="1"/>
</dbReference>
<dbReference type="PANTHER" id="PTHR22976">
    <property type="entry name" value="BIOTIN SYNTHASE"/>
    <property type="match status" value="1"/>
</dbReference>
<dbReference type="PANTHER" id="PTHR22976:SF2">
    <property type="entry name" value="BIOTIN SYNTHASE, MITOCHONDRIAL"/>
    <property type="match status" value="1"/>
</dbReference>
<dbReference type="Pfam" id="PF06968">
    <property type="entry name" value="BATS"/>
    <property type="match status" value="1"/>
</dbReference>
<dbReference type="Pfam" id="PF04055">
    <property type="entry name" value="Radical_SAM"/>
    <property type="match status" value="1"/>
</dbReference>
<dbReference type="PIRSF" id="PIRSF001619">
    <property type="entry name" value="Biotin_synth"/>
    <property type="match status" value="1"/>
</dbReference>
<dbReference type="SFLD" id="SFLDG01060">
    <property type="entry name" value="BATS_domain_containing"/>
    <property type="match status" value="1"/>
</dbReference>
<dbReference type="SFLD" id="SFLDG01278">
    <property type="entry name" value="biotin_synthase_like"/>
    <property type="match status" value="1"/>
</dbReference>
<dbReference type="SMART" id="SM00876">
    <property type="entry name" value="BATS"/>
    <property type="match status" value="1"/>
</dbReference>
<dbReference type="SMART" id="SM00729">
    <property type="entry name" value="Elp3"/>
    <property type="match status" value="1"/>
</dbReference>
<dbReference type="SUPFAM" id="SSF102114">
    <property type="entry name" value="Radical SAM enzymes"/>
    <property type="match status" value="1"/>
</dbReference>
<dbReference type="PROSITE" id="PS51918">
    <property type="entry name" value="RADICAL_SAM"/>
    <property type="match status" value="1"/>
</dbReference>
<reference key="1">
    <citation type="submission" date="2007-05" db="EMBL/GenBank/DDBJ databases">
        <title>Complete sequence of chromosome of Staphylococcus aureus subsp. aureus JH9.</title>
        <authorList>
            <consortium name="US DOE Joint Genome Institute"/>
            <person name="Copeland A."/>
            <person name="Lucas S."/>
            <person name="Lapidus A."/>
            <person name="Barry K."/>
            <person name="Detter J.C."/>
            <person name="Glavina del Rio T."/>
            <person name="Hammon N."/>
            <person name="Israni S."/>
            <person name="Pitluck S."/>
            <person name="Chain P."/>
            <person name="Malfatti S."/>
            <person name="Shin M."/>
            <person name="Vergez L."/>
            <person name="Schmutz J."/>
            <person name="Larimer F."/>
            <person name="Land M."/>
            <person name="Hauser L."/>
            <person name="Kyrpides N."/>
            <person name="Kim E."/>
            <person name="Tomasz A."/>
            <person name="Richardson P."/>
        </authorList>
    </citation>
    <scope>NUCLEOTIDE SEQUENCE [LARGE SCALE GENOMIC DNA]</scope>
    <source>
        <strain>JH9</strain>
    </source>
</reference>
<sequence>MNLAKRILQGEQLTKETVLKIYEDTNIDTLDLLNEAYILRKHYFGKKVKLNMILNAKSGICPENCGYCGQSRDIKQKQRYALIPEEQIIDGAKVAHDNHIGTYCIVMSGRGPSDKEVDHISNTVRTIKSQHPQLKICACLGLTNDEQAKKLKSAGVDRYNHNINTSENYHDNVVTTHSYKDRTDTIELMKANNISPCSGVICGMGESNQDIVDMAFALKEMDADSIPINFLHPIKGTKFGSMDDLTPMKCLRIVALFRLINPTKEIRIAGGREVNLRSLQPLALKAANSIFVGDYLITGGQPNQLDYDMINDLGFEIDYDTCENKENKNDVSRAN</sequence>
<feature type="chain" id="PRO_0000381646" description="Biotin synthase">
    <location>
        <begin position="1"/>
        <end position="335"/>
    </location>
</feature>
<feature type="domain" description="Radical SAM core" evidence="2">
    <location>
        <begin position="43"/>
        <end position="269"/>
    </location>
</feature>
<feature type="binding site" evidence="1">
    <location>
        <position position="61"/>
    </location>
    <ligand>
        <name>[4Fe-4S] cluster</name>
        <dbReference type="ChEBI" id="CHEBI:49883"/>
        <note>4Fe-4S-S-AdoMet</note>
    </ligand>
</feature>
<feature type="binding site" evidence="1">
    <location>
        <position position="65"/>
    </location>
    <ligand>
        <name>[4Fe-4S] cluster</name>
        <dbReference type="ChEBI" id="CHEBI:49883"/>
        <note>4Fe-4S-S-AdoMet</note>
    </ligand>
</feature>
<feature type="binding site" evidence="1">
    <location>
        <position position="68"/>
    </location>
    <ligand>
        <name>[4Fe-4S] cluster</name>
        <dbReference type="ChEBI" id="CHEBI:49883"/>
        <note>4Fe-4S-S-AdoMet</note>
    </ligand>
</feature>
<feature type="binding site" evidence="1">
    <location>
        <position position="104"/>
    </location>
    <ligand>
        <name>[2Fe-2S] cluster</name>
        <dbReference type="ChEBI" id="CHEBI:190135"/>
    </ligand>
</feature>
<feature type="binding site" evidence="1">
    <location>
        <position position="137"/>
    </location>
    <ligand>
        <name>[2Fe-2S] cluster</name>
        <dbReference type="ChEBI" id="CHEBI:190135"/>
    </ligand>
</feature>
<feature type="binding site" evidence="1">
    <location>
        <position position="197"/>
    </location>
    <ligand>
        <name>[2Fe-2S] cluster</name>
        <dbReference type="ChEBI" id="CHEBI:190135"/>
    </ligand>
</feature>
<feature type="binding site" evidence="1">
    <location>
        <position position="267"/>
    </location>
    <ligand>
        <name>[2Fe-2S] cluster</name>
        <dbReference type="ChEBI" id="CHEBI:190135"/>
    </ligand>
</feature>
<evidence type="ECO:0000255" key="1">
    <source>
        <dbReference type="HAMAP-Rule" id="MF_01694"/>
    </source>
</evidence>
<evidence type="ECO:0000255" key="2">
    <source>
        <dbReference type="PROSITE-ProRule" id="PRU01266"/>
    </source>
</evidence>
<protein>
    <recommendedName>
        <fullName evidence="1">Biotin synthase</fullName>
        <ecNumber evidence="1">2.8.1.6</ecNumber>
    </recommendedName>
</protein>
<keyword id="KW-0001">2Fe-2S</keyword>
<keyword id="KW-0004">4Fe-4S</keyword>
<keyword id="KW-0093">Biotin biosynthesis</keyword>
<keyword id="KW-0408">Iron</keyword>
<keyword id="KW-0411">Iron-sulfur</keyword>
<keyword id="KW-0479">Metal-binding</keyword>
<keyword id="KW-0949">S-adenosyl-L-methionine</keyword>
<keyword id="KW-0808">Transferase</keyword>
<organism>
    <name type="scientific">Staphylococcus aureus (strain JH9)</name>
    <dbReference type="NCBI Taxonomy" id="359786"/>
    <lineage>
        <taxon>Bacteria</taxon>
        <taxon>Bacillati</taxon>
        <taxon>Bacillota</taxon>
        <taxon>Bacilli</taxon>
        <taxon>Bacillales</taxon>
        <taxon>Staphylococcaceae</taxon>
        <taxon>Staphylococcus</taxon>
    </lineage>
</organism>
<accession>A5IVK5</accession>
<proteinExistence type="inferred from homology"/>
<gene>
    <name evidence="1" type="primary">bioB</name>
    <name type="ordered locus">SaurJH9_2451</name>
</gene>
<name>BIOB_STAA9</name>